<name>DHX29_HUMAN</name>
<reference key="1">
    <citation type="submission" date="2001-05" db="EMBL/GenBank/DDBJ databases">
        <title>Identification of a new member of the DDx subfamily of helicases.</title>
        <authorList>
            <person name="Abdelhaleem M.M."/>
        </authorList>
    </citation>
    <scope>NUCLEOTIDE SEQUENCE [MRNA]</scope>
</reference>
<reference key="2">
    <citation type="journal article" date="2004" name="Genome Res.">
        <title>The status, quality, and expansion of the NIH full-length cDNA project: the Mammalian Gene Collection (MGC).</title>
        <authorList>
            <consortium name="The MGC Project Team"/>
        </authorList>
    </citation>
    <scope>NUCLEOTIDE SEQUENCE [LARGE SCALE MRNA]</scope>
    <scope>VARIANT HIS-630</scope>
    <source>
        <tissue>Brain</tissue>
    </source>
</reference>
<reference key="3">
    <citation type="journal article" date="2007" name="BMC Genomics">
        <title>The full-ORF clone resource of the German cDNA consortium.</title>
        <authorList>
            <person name="Bechtel S."/>
            <person name="Rosenfelder H."/>
            <person name="Duda A."/>
            <person name="Schmidt C.P."/>
            <person name="Ernst U."/>
            <person name="Wellenreuther R."/>
            <person name="Mehrle A."/>
            <person name="Schuster C."/>
            <person name="Bahr A."/>
            <person name="Bloecker H."/>
            <person name="Heubner D."/>
            <person name="Hoerlein A."/>
            <person name="Michel G."/>
            <person name="Wedler H."/>
            <person name="Koehrer K."/>
            <person name="Ottenwaelder B."/>
            <person name="Poustka A."/>
            <person name="Wiemann S."/>
            <person name="Schupp I."/>
        </authorList>
    </citation>
    <scope>NUCLEOTIDE SEQUENCE [LARGE SCALE MRNA] OF 57-1369</scope>
    <source>
        <tissue>Amygdala</tissue>
        <tissue>Fetal kidney</tissue>
        <tissue>Testis</tissue>
    </source>
</reference>
<reference key="4">
    <citation type="submission" date="2000-07" db="EMBL/GenBank/DDBJ databases">
        <authorList>
            <person name="Bassi M.T."/>
            <person name="Banfi S."/>
            <person name="Riboni M."/>
            <person name="Ballabio A."/>
            <person name="Borsani G."/>
        </authorList>
    </citation>
    <scope>NUCLEOTIDE SEQUENCE [LARGE SCALE MRNA] OF 561-1369</scope>
</reference>
<reference key="5">
    <citation type="submission" date="1998-06" db="EMBL/GenBank/DDBJ databases">
        <authorList>
            <person name="Yu W."/>
            <person name="Gibbs R.A."/>
        </authorList>
    </citation>
    <scope>NUCLEOTIDE SEQUENCE [LARGE SCALE MRNA] OF 1119-1369</scope>
    <source>
        <tissue>Brain</tissue>
    </source>
</reference>
<reference key="6">
    <citation type="journal article" date="2006" name="Nat. Biotechnol.">
        <title>A probability-based approach for high-throughput protein phosphorylation analysis and site localization.</title>
        <authorList>
            <person name="Beausoleil S.A."/>
            <person name="Villen J."/>
            <person name="Gerber S.A."/>
            <person name="Rush J."/>
            <person name="Gygi S.P."/>
        </authorList>
    </citation>
    <scope>PHOSPHORYLATION [LARGE SCALE ANALYSIS] AT SER-192 AND SER-200</scope>
    <scope>IDENTIFICATION BY MASS SPECTROMETRY [LARGE SCALE ANALYSIS]</scope>
    <source>
        <tissue>Cervix carcinoma</tissue>
    </source>
</reference>
<reference key="7">
    <citation type="journal article" date="2008" name="Cell">
        <title>Translation initiation on mammalian mRNAs with structured 5'UTRs requires DExH-box protein DHX29.</title>
        <authorList>
            <person name="Pisareva V.P."/>
            <person name="Pisarev A.V."/>
            <person name="Komar A.A."/>
            <person name="Hellen C.U.T."/>
            <person name="Pestova T.V."/>
        </authorList>
    </citation>
    <scope>FUNCTION</scope>
    <scope>RIBOSOME-BINDING</scope>
    <scope>IDENTIFICATION BY MASS SPECTROMETRY</scope>
</reference>
<reference key="8">
    <citation type="journal article" date="2008" name="Proc. Natl. Acad. Sci. U.S.A.">
        <title>A quantitative atlas of mitotic phosphorylation.</title>
        <authorList>
            <person name="Dephoure N."/>
            <person name="Zhou C."/>
            <person name="Villen J."/>
            <person name="Beausoleil S.A."/>
            <person name="Bakalarski C.E."/>
            <person name="Elledge S.J."/>
            <person name="Gygi S.P."/>
        </authorList>
    </citation>
    <scope>PHOSPHORYLATION [LARGE SCALE ANALYSIS] AT SER-192 AND SER-200</scope>
    <scope>IDENTIFICATION BY MASS SPECTROMETRY [LARGE SCALE ANALYSIS]</scope>
    <source>
        <tissue>Cervix carcinoma</tissue>
    </source>
</reference>
<reference key="9">
    <citation type="journal article" date="2009" name="Anal. Chem.">
        <title>Lys-N and trypsin cover complementary parts of the phosphoproteome in a refined SCX-based approach.</title>
        <authorList>
            <person name="Gauci S."/>
            <person name="Helbig A.O."/>
            <person name="Slijper M."/>
            <person name="Krijgsveld J."/>
            <person name="Heck A.J."/>
            <person name="Mohammed S."/>
        </authorList>
    </citation>
    <scope>IDENTIFICATION BY MASS SPECTROMETRY [LARGE SCALE ANALYSIS]</scope>
</reference>
<reference key="10">
    <citation type="journal article" date="2010" name="Sci. Signal.">
        <title>Quantitative phosphoproteomics reveals widespread full phosphorylation site occupancy during mitosis.</title>
        <authorList>
            <person name="Olsen J.V."/>
            <person name="Vermeulen M."/>
            <person name="Santamaria A."/>
            <person name="Kumar C."/>
            <person name="Miller M.L."/>
            <person name="Jensen L.J."/>
            <person name="Gnad F."/>
            <person name="Cox J."/>
            <person name="Jensen T.S."/>
            <person name="Nigg E.A."/>
            <person name="Brunak S."/>
            <person name="Mann M."/>
        </authorList>
    </citation>
    <scope>PHOSPHORYLATION [LARGE SCALE ANALYSIS] AT SER-71 AND SER-200</scope>
    <scope>IDENTIFICATION BY MASS SPECTROMETRY [LARGE SCALE ANALYSIS]</scope>
    <source>
        <tissue>Cervix carcinoma</tissue>
    </source>
</reference>
<reference key="11">
    <citation type="journal article" date="2011" name="BMC Syst. Biol.">
        <title>Initial characterization of the human central proteome.</title>
        <authorList>
            <person name="Burkard T.R."/>
            <person name="Planyavsky M."/>
            <person name="Kaupe I."/>
            <person name="Breitwieser F.P."/>
            <person name="Buerckstuemmer T."/>
            <person name="Bennett K.L."/>
            <person name="Superti-Furga G."/>
            <person name="Colinge J."/>
        </authorList>
    </citation>
    <scope>IDENTIFICATION BY MASS SPECTROMETRY [LARGE SCALE ANALYSIS]</scope>
</reference>
<reference key="12">
    <citation type="journal article" date="2011" name="Sci. Signal.">
        <title>System-wide temporal characterization of the proteome and phosphoproteome of human embryonic stem cell differentiation.</title>
        <authorList>
            <person name="Rigbolt K.T."/>
            <person name="Prokhorova T.A."/>
            <person name="Akimov V."/>
            <person name="Henningsen J."/>
            <person name="Johansen P.T."/>
            <person name="Kratchmarova I."/>
            <person name="Kassem M."/>
            <person name="Mann M."/>
            <person name="Olsen J.V."/>
            <person name="Blagoev B."/>
        </authorList>
    </citation>
    <scope>PHOSPHORYLATION [LARGE SCALE ANALYSIS] AT SER-200</scope>
    <scope>IDENTIFICATION BY MASS SPECTROMETRY [LARGE SCALE ANALYSIS]</scope>
</reference>
<reference key="13">
    <citation type="journal article" date="2013" name="J. Proteome Res.">
        <title>Toward a comprehensive characterization of a human cancer cell phosphoproteome.</title>
        <authorList>
            <person name="Zhou H."/>
            <person name="Di Palma S."/>
            <person name="Preisinger C."/>
            <person name="Peng M."/>
            <person name="Polat A.N."/>
            <person name="Heck A.J."/>
            <person name="Mohammed S."/>
        </authorList>
    </citation>
    <scope>PHOSPHORYLATION [LARGE SCALE ANALYSIS] AT SER-200</scope>
    <scope>IDENTIFICATION BY MASS SPECTROMETRY [LARGE SCALE ANALYSIS]</scope>
    <source>
        <tissue>Cervix carcinoma</tissue>
        <tissue>Erythroleukemia</tissue>
    </source>
</reference>
<reference key="14">
    <citation type="journal article" date="2014" name="J. Proteomics">
        <title>An enzyme assisted RP-RPLC approach for in-depth analysis of human liver phosphoproteome.</title>
        <authorList>
            <person name="Bian Y."/>
            <person name="Song C."/>
            <person name="Cheng K."/>
            <person name="Dong M."/>
            <person name="Wang F."/>
            <person name="Huang J."/>
            <person name="Sun D."/>
            <person name="Wang L."/>
            <person name="Ye M."/>
            <person name="Zou H."/>
        </authorList>
    </citation>
    <scope>IDENTIFICATION BY MASS SPECTROMETRY [LARGE SCALE ANALYSIS]</scope>
    <source>
        <tissue>Liver</tissue>
    </source>
</reference>
<reference key="15">
    <citation type="journal article" date="2013" name="Cell">
        <title>Structure of the mammalian ribosomal 43S preinitiation complex bound to the scanning factor DHX29.</title>
        <authorList>
            <person name="Hashem Y."/>
            <person name="des Georges A."/>
            <person name="Dhote V."/>
            <person name="Langlois R."/>
            <person name="Liao H.Y."/>
            <person name="Grassucci R.A."/>
            <person name="Hellen C.U."/>
            <person name="Pestova T.V."/>
            <person name="Frank J."/>
        </authorList>
    </citation>
    <scope>STRUCTURE BY ELECTRON MICROSCOPY (11.6 ANGSTROMS) IN COMPLEX WITH THE 43S PRE-INITIATION COMPLEX</scope>
    <scope>FUNCTION</scope>
    <scope>SUBUNIT</scope>
</reference>
<dbReference type="EC" id="3.6.4.13" evidence="1"/>
<dbReference type="EMBL" id="AY036974">
    <property type="protein sequence ID" value="AAK64516.1"/>
    <property type="molecule type" value="mRNA"/>
</dbReference>
<dbReference type="EMBL" id="BC056219">
    <property type="protein sequence ID" value="AAH56219.1"/>
    <property type="molecule type" value="mRNA"/>
</dbReference>
<dbReference type="EMBL" id="AL834496">
    <property type="protein sequence ID" value="CAD39154.1"/>
    <property type="molecule type" value="mRNA"/>
</dbReference>
<dbReference type="EMBL" id="BX648101">
    <property type="protein sequence ID" value="CAH56172.1"/>
    <property type="molecule type" value="mRNA"/>
</dbReference>
<dbReference type="EMBL" id="BX648269">
    <property type="protein sequence ID" value="CAH56153.1"/>
    <property type="molecule type" value="mRNA"/>
</dbReference>
<dbReference type="EMBL" id="AL079292">
    <property type="protein sequence ID" value="CAB45191.1"/>
    <property type="molecule type" value="mRNA"/>
</dbReference>
<dbReference type="EMBL" id="AF070639">
    <property type="protein sequence ID" value="AAC25394.1"/>
    <property type="molecule type" value="mRNA"/>
</dbReference>
<dbReference type="CCDS" id="CCDS34158.1"/>
<dbReference type="RefSeq" id="NP_001332893.1">
    <property type="nucleotide sequence ID" value="NM_001345964.1"/>
</dbReference>
<dbReference type="RefSeq" id="NP_001332894.1">
    <property type="nucleotide sequence ID" value="NM_001345965.1"/>
</dbReference>
<dbReference type="RefSeq" id="NP_061903.2">
    <property type="nucleotide sequence ID" value="NM_019030.4"/>
</dbReference>
<dbReference type="SMR" id="Q7Z478"/>
<dbReference type="BioGRID" id="120001">
    <property type="interactions" value="164"/>
</dbReference>
<dbReference type="FunCoup" id="Q7Z478">
    <property type="interactions" value="1845"/>
</dbReference>
<dbReference type="IntAct" id="Q7Z478">
    <property type="interactions" value="66"/>
</dbReference>
<dbReference type="MINT" id="Q7Z478"/>
<dbReference type="STRING" id="9606.ENSP00000251636"/>
<dbReference type="BindingDB" id="Q7Z478"/>
<dbReference type="ChEMBL" id="CHEMBL4105909"/>
<dbReference type="GlyGen" id="Q7Z478">
    <property type="glycosylation" value="1 site, 1 O-linked glycan (1 site)"/>
</dbReference>
<dbReference type="iPTMnet" id="Q7Z478"/>
<dbReference type="PhosphoSitePlus" id="Q7Z478"/>
<dbReference type="BioMuta" id="DHX29"/>
<dbReference type="DMDM" id="110278938"/>
<dbReference type="jPOST" id="Q7Z478"/>
<dbReference type="MassIVE" id="Q7Z478"/>
<dbReference type="PaxDb" id="9606-ENSP00000251636"/>
<dbReference type="PeptideAtlas" id="Q7Z478"/>
<dbReference type="ProteomicsDB" id="69161"/>
<dbReference type="Pumba" id="Q7Z478"/>
<dbReference type="Antibodypedia" id="11081">
    <property type="antibodies" value="95 antibodies from 23 providers"/>
</dbReference>
<dbReference type="DNASU" id="54505"/>
<dbReference type="Ensembl" id="ENST00000251636.10">
    <property type="protein sequence ID" value="ENSP00000251636.5"/>
    <property type="gene ID" value="ENSG00000067248.11"/>
</dbReference>
<dbReference type="GeneID" id="54505"/>
<dbReference type="KEGG" id="hsa:54505"/>
<dbReference type="MANE-Select" id="ENST00000251636.10">
    <property type="protein sequence ID" value="ENSP00000251636.5"/>
    <property type="RefSeq nucleotide sequence ID" value="NM_019030.4"/>
    <property type="RefSeq protein sequence ID" value="NP_061903.2"/>
</dbReference>
<dbReference type="UCSC" id="uc003jpx.4">
    <property type="organism name" value="human"/>
</dbReference>
<dbReference type="AGR" id="HGNC:15815"/>
<dbReference type="CTD" id="54505"/>
<dbReference type="DisGeNET" id="54505"/>
<dbReference type="GeneCards" id="DHX29"/>
<dbReference type="HGNC" id="HGNC:15815">
    <property type="gene designation" value="DHX29"/>
</dbReference>
<dbReference type="HPA" id="ENSG00000067248">
    <property type="expression patterns" value="Low tissue specificity"/>
</dbReference>
<dbReference type="MalaCards" id="DHX29"/>
<dbReference type="MIM" id="612720">
    <property type="type" value="gene"/>
</dbReference>
<dbReference type="neXtProt" id="NX_Q7Z478"/>
<dbReference type="OpenTargets" id="ENSG00000067248"/>
<dbReference type="PharmGKB" id="PA27215"/>
<dbReference type="VEuPathDB" id="HostDB:ENSG00000067248"/>
<dbReference type="eggNOG" id="KOG0920">
    <property type="taxonomic scope" value="Eukaryota"/>
</dbReference>
<dbReference type="GeneTree" id="ENSGT00940000157286"/>
<dbReference type="HOGENOM" id="CLU_001832_1_4_1"/>
<dbReference type="InParanoid" id="Q7Z478"/>
<dbReference type="OMA" id="SWFANMS"/>
<dbReference type="OrthoDB" id="5600252at2759"/>
<dbReference type="PAN-GO" id="Q7Z478">
    <property type="GO annotations" value="2 GO annotations based on evolutionary models"/>
</dbReference>
<dbReference type="PhylomeDB" id="Q7Z478"/>
<dbReference type="TreeFam" id="TF324744"/>
<dbReference type="PathwayCommons" id="Q7Z478"/>
<dbReference type="SignaLink" id="Q7Z478"/>
<dbReference type="BioGRID-ORCS" id="54505">
    <property type="hits" value="122 hits in 1178 CRISPR screens"/>
</dbReference>
<dbReference type="CD-CODE" id="232F8A39">
    <property type="entry name" value="P-body"/>
</dbReference>
<dbReference type="CD-CODE" id="91857CE7">
    <property type="entry name" value="Nucleolus"/>
</dbReference>
<dbReference type="ChiTaRS" id="DHX29">
    <property type="organism name" value="human"/>
</dbReference>
<dbReference type="GenomeRNAi" id="54505"/>
<dbReference type="Pharos" id="Q7Z478">
    <property type="development level" value="Tbio"/>
</dbReference>
<dbReference type="PRO" id="PR:Q7Z478"/>
<dbReference type="Proteomes" id="UP000005640">
    <property type="component" value="Chromosome 5"/>
</dbReference>
<dbReference type="RNAct" id="Q7Z478">
    <property type="molecule type" value="protein"/>
</dbReference>
<dbReference type="Bgee" id="ENSG00000067248">
    <property type="expression patterns" value="Expressed in esophagus squamous epithelium and 214 other cell types or tissues"/>
</dbReference>
<dbReference type="ExpressionAtlas" id="Q7Z478">
    <property type="expression patterns" value="baseline and differential"/>
</dbReference>
<dbReference type="GO" id="GO:0022627">
    <property type="term" value="C:cytosolic small ribosomal subunit"/>
    <property type="evidence" value="ECO:0000314"/>
    <property type="project" value="CACAO"/>
</dbReference>
<dbReference type="GO" id="GO:0016282">
    <property type="term" value="C:eukaryotic 43S preinitiation complex"/>
    <property type="evidence" value="ECO:0000314"/>
    <property type="project" value="UniProtKB"/>
</dbReference>
<dbReference type="GO" id="GO:0005524">
    <property type="term" value="F:ATP binding"/>
    <property type="evidence" value="ECO:0007669"/>
    <property type="project" value="UniProtKB-UniRule"/>
</dbReference>
<dbReference type="GO" id="GO:0016887">
    <property type="term" value="F:ATP hydrolysis activity"/>
    <property type="evidence" value="ECO:0007669"/>
    <property type="project" value="RHEA"/>
</dbReference>
<dbReference type="GO" id="GO:0045296">
    <property type="term" value="F:cadherin binding"/>
    <property type="evidence" value="ECO:0007005"/>
    <property type="project" value="BHF-UCL"/>
</dbReference>
<dbReference type="GO" id="GO:0004386">
    <property type="term" value="F:helicase activity"/>
    <property type="evidence" value="ECO:0000318"/>
    <property type="project" value="GO_Central"/>
</dbReference>
<dbReference type="GO" id="GO:0017111">
    <property type="term" value="F:ribonucleoside triphosphate phosphatase activity"/>
    <property type="evidence" value="ECO:0000315"/>
    <property type="project" value="CACAO"/>
</dbReference>
<dbReference type="GO" id="GO:0043024">
    <property type="term" value="F:ribosomal small subunit binding"/>
    <property type="evidence" value="ECO:0000314"/>
    <property type="project" value="UniProtKB"/>
</dbReference>
<dbReference type="GO" id="GO:0003723">
    <property type="term" value="F:RNA binding"/>
    <property type="evidence" value="ECO:0007005"/>
    <property type="project" value="UniProtKB"/>
</dbReference>
<dbReference type="GO" id="GO:0003724">
    <property type="term" value="F:RNA helicase activity"/>
    <property type="evidence" value="ECO:0007669"/>
    <property type="project" value="UniProtKB-UniRule"/>
</dbReference>
<dbReference type="GO" id="GO:0008494">
    <property type="term" value="F:translation activator activity"/>
    <property type="evidence" value="ECO:0000315"/>
    <property type="project" value="CACAO"/>
</dbReference>
<dbReference type="GO" id="GO:0003743">
    <property type="term" value="F:translation initiation factor activity"/>
    <property type="evidence" value="ECO:0007669"/>
    <property type="project" value="UniProtKB-KW"/>
</dbReference>
<dbReference type="GO" id="GO:0001731">
    <property type="term" value="P:formation of translation preinitiation complex"/>
    <property type="evidence" value="ECO:0000315"/>
    <property type="project" value="CACAO"/>
</dbReference>
<dbReference type="GO" id="GO:0045948">
    <property type="term" value="P:positive regulation of translational initiation"/>
    <property type="evidence" value="ECO:0007669"/>
    <property type="project" value="UniProtKB-UniRule"/>
</dbReference>
<dbReference type="GO" id="GO:0042255">
    <property type="term" value="P:ribosome assembly"/>
    <property type="evidence" value="ECO:0000315"/>
    <property type="project" value="CACAO"/>
</dbReference>
<dbReference type="CDD" id="cd17975">
    <property type="entry name" value="DEXHc_DHX29"/>
    <property type="match status" value="1"/>
</dbReference>
<dbReference type="CDD" id="cd18791">
    <property type="entry name" value="SF2_C_RHA"/>
    <property type="match status" value="1"/>
</dbReference>
<dbReference type="FunFam" id="3.40.50.300:FF:000325">
    <property type="entry name" value="ATP-dependent RNA helicase DHX29"/>
    <property type="match status" value="1"/>
</dbReference>
<dbReference type="FunFam" id="3.40.50.300:FF:000500">
    <property type="entry name" value="ATP-dependent RNA helicase DHX29"/>
    <property type="match status" value="1"/>
</dbReference>
<dbReference type="FunFam" id="1.20.120.1080:FF:000002">
    <property type="entry name" value="Putative ATP-dependent RNA helicase DHX36"/>
    <property type="match status" value="1"/>
</dbReference>
<dbReference type="Gene3D" id="1.20.120.1080">
    <property type="match status" value="1"/>
</dbReference>
<dbReference type="Gene3D" id="3.40.50.300">
    <property type="entry name" value="P-loop containing nucleotide triphosphate hydrolases"/>
    <property type="match status" value="2"/>
</dbReference>
<dbReference type="HAMAP" id="MF_03068">
    <property type="entry name" value="DHX29"/>
    <property type="match status" value="1"/>
</dbReference>
<dbReference type="InterPro" id="IPR011709">
    <property type="entry name" value="DEAD-box_helicase_OB_fold"/>
</dbReference>
<dbReference type="InterPro" id="IPR011545">
    <property type="entry name" value="DEAD/DEAH_box_helicase_dom"/>
</dbReference>
<dbReference type="InterPro" id="IPR034730">
    <property type="entry name" value="DHX29"/>
</dbReference>
<dbReference type="InterPro" id="IPR002464">
    <property type="entry name" value="DNA/RNA_helicase_DEAH_CS"/>
</dbReference>
<dbReference type="InterPro" id="IPR056328">
    <property type="entry name" value="DSRM_DHX29"/>
</dbReference>
<dbReference type="InterPro" id="IPR048333">
    <property type="entry name" value="HA2_WH"/>
</dbReference>
<dbReference type="InterPro" id="IPR007502">
    <property type="entry name" value="Helicase-assoc_dom"/>
</dbReference>
<dbReference type="InterPro" id="IPR014001">
    <property type="entry name" value="Helicase_ATP-bd"/>
</dbReference>
<dbReference type="InterPro" id="IPR001650">
    <property type="entry name" value="Helicase_C-like"/>
</dbReference>
<dbReference type="InterPro" id="IPR027417">
    <property type="entry name" value="P-loop_NTPase"/>
</dbReference>
<dbReference type="InterPro" id="IPR056890">
    <property type="entry name" value="UBA_DHX29-like"/>
</dbReference>
<dbReference type="PANTHER" id="PTHR18934">
    <property type="entry name" value="ATP-DEPENDENT RNA HELICASE"/>
    <property type="match status" value="1"/>
</dbReference>
<dbReference type="PANTHER" id="PTHR18934:SF264">
    <property type="entry name" value="ATP-DEPENDENT RNA HELICASE DHX29"/>
    <property type="match status" value="1"/>
</dbReference>
<dbReference type="Pfam" id="PF00270">
    <property type="entry name" value="DEAD"/>
    <property type="match status" value="1"/>
</dbReference>
<dbReference type="Pfam" id="PF24385">
    <property type="entry name" value="DSRM_DHX29"/>
    <property type="match status" value="1"/>
</dbReference>
<dbReference type="Pfam" id="PF21010">
    <property type="entry name" value="HA2_C"/>
    <property type="match status" value="1"/>
</dbReference>
<dbReference type="Pfam" id="PF04408">
    <property type="entry name" value="HA2_N"/>
    <property type="match status" value="1"/>
</dbReference>
<dbReference type="Pfam" id="PF00271">
    <property type="entry name" value="Helicase_C"/>
    <property type="match status" value="1"/>
</dbReference>
<dbReference type="Pfam" id="PF07717">
    <property type="entry name" value="OB_NTP_bind"/>
    <property type="match status" value="1"/>
</dbReference>
<dbReference type="Pfam" id="PF24899">
    <property type="entry name" value="UBA_DHX29"/>
    <property type="match status" value="1"/>
</dbReference>
<dbReference type="SMART" id="SM00487">
    <property type="entry name" value="DEXDc"/>
    <property type="match status" value="1"/>
</dbReference>
<dbReference type="SMART" id="SM00847">
    <property type="entry name" value="HA2"/>
    <property type="match status" value="1"/>
</dbReference>
<dbReference type="SMART" id="SM00490">
    <property type="entry name" value="HELICc"/>
    <property type="match status" value="1"/>
</dbReference>
<dbReference type="SUPFAM" id="SSF52540">
    <property type="entry name" value="P-loop containing nucleoside triphosphate hydrolases"/>
    <property type="match status" value="1"/>
</dbReference>
<dbReference type="PROSITE" id="PS00690">
    <property type="entry name" value="DEAH_ATP_HELICASE"/>
    <property type="match status" value="1"/>
</dbReference>
<dbReference type="PROSITE" id="PS51192">
    <property type="entry name" value="HELICASE_ATP_BIND_1"/>
    <property type="match status" value="1"/>
</dbReference>
<dbReference type="PROSITE" id="PS51194">
    <property type="entry name" value="HELICASE_CTER"/>
    <property type="match status" value="1"/>
</dbReference>
<comment type="function">
    <text evidence="1 4 5">ATP-binding RNA helicase involved in translation initiation. Part of the 43S pre-initiation complex that is required for efficient initiation on mRNAs of higher eukaryotes with structured 5'-UTRs by promoting efficient NTPase-dependent 48S complex formation. Specifically binds to the 40S ribosome near the mRNA entrance. Does not possess a processive helicase activity.</text>
</comment>
<comment type="catalytic activity">
    <reaction evidence="1">
        <text>ATP + H2O = ADP + phosphate + H(+)</text>
        <dbReference type="Rhea" id="RHEA:13065"/>
        <dbReference type="ChEBI" id="CHEBI:15377"/>
        <dbReference type="ChEBI" id="CHEBI:15378"/>
        <dbReference type="ChEBI" id="CHEBI:30616"/>
        <dbReference type="ChEBI" id="CHEBI:43474"/>
        <dbReference type="ChEBI" id="CHEBI:456216"/>
        <dbReference type="EC" id="3.6.4.13"/>
    </reaction>
</comment>
<comment type="subunit">
    <text evidence="1 5">Part of the 43S pre-initiation complex (PIC) that contains at least Met-tRNA, EIF1, EIF1A (EIF1AX or EIF1AY), EIF2S1, EIF2S2, EIF2S3, EIF3A, EIF3B, EIF3C, EIF3D, EIF3E, EIF3F, EIF3G, EIF3H, EIF3I, EIF3J, EIF3K, EIF3L, EIF3M, DHX29 and the 40S ribosomal subunit.</text>
</comment>
<comment type="subcellular location">
    <subcellularLocation>
        <location evidence="1">Cytoplasm</location>
    </subcellularLocation>
</comment>
<comment type="similarity">
    <text evidence="1">Belongs to the DEAD box helicase family. DEAH subfamily.</text>
</comment>
<sequence>MGGKNKKHKAPAAAVVRAAVSASRAKSAEAGIAGEAQSKKPVSRPATAAAAAAGSREPRVKQGPKIYSFNSTNDSSGPANLDKSILKVVINNKLEQRIIGVINEHKKQNNDKGMISGRLTAKKLQDLYMALQAFSFKTKDIEDAMTNTLLYGGDLHSALDWLCLNLSDDALPEGFSQEFEEQQPKSRPKFQSPQIQATISPPLQPKTKTYEEDPKSKPKKEEKNMEVNMKEWILRYAEQQNEEEKNENSKSLEEEEKFDPNERYLHLAAKLLDAKEQAATFKLEKNKQGQKEAQEKIRKFQREMETLEDHPVFNPAMKISHQQNERKKPPVATEGESALNFNLFEKSAAATEEEKDKKKEPHDVRNFDYTARSWTGKSPKQFLIDWVRKNLPKSPNPSFEKVPVGRYWKCRVRVIKSEDDVLVVCPTILTEDGMQAQHLGATLALYRLVKGQSVHQLLPPTYRDVWLEWSDAEKKREELNKMETNKPRDLFIAKLLNKLKQQQQQQQQHSENKRENSEDPEESWENLVSDEDFSALSLESANVEDLEPVRNLFRKLQSTPKYQKLLKERQQLPVFKHRDSIVETLKRHRVVVVAGETGSGKSTQVPHFLLEDLLLNEWEASKCNIVCTQPRRISAVSLANRVCDELGCENGPGGRNSLCGYQIRMESRACESTRLLYCTTGVLLRKLQEDGLLSNVSHVIVDEVHERSVQSDFLLIILKEILQKRSDLHLILMSATVDSEKFSTYFTHCPILRISGRSYPVEVFHLEDIIEETGFVLEKDSEYCQKFLEEEEEVTINVTSKAGGIKKYQEYIPVQTGAHADLNPFYQKYSSRTQHAILYMNPHKINLDLILELLAYLDKSPQFRNIEGAVLIFLPGLAHIQQLYDLLSNDRRFYSERYKVIALHSILSTQDQAAAFTLPPPGVRKIVLATNIAETGITIPDVVFVIDTGRTKENKYHESSQMSSLVETFVSKASALQRQGRAGRVRDGFCFRMYTRERFEGFMDYSVPEILRVPLEELCLHIMKCNLGSPEDFLSKALDPPQLQVISNAMNLLRKIGACELNEPKLTPLGQHLAALPVNVKIGKMLIFGAIFGCLDPVATLAAVMTEKSPFTTPIGRKDEADLAKSALAMADSDHLTIYNAYLGWKKARQEGGYRSEITYCRRNFLNRTSLLTLEDVKQELIKLVKAAGFSSSTTSTSWEGNRASQTLSFQEIALLKAVLVAGLYDNVGKIIYTKSVDVTEKLACIVETAQGKAQVHPSSVNRDLQTHGWLLYQEKIRYARVYLRETTLITPFPVLLFGGDIEVQHRERLLSIDGWIYFQAPVKIAVIFKQLRVLIDSVLRKKLENPKMSLENDKILQIITELIKTENN</sequence>
<gene>
    <name evidence="1" type="primary">DHX29</name>
    <name type="synonym">DDX29</name>
</gene>
<proteinExistence type="evidence at protein level"/>
<protein>
    <recommendedName>
        <fullName evidence="1">ATP-dependent RNA helicase DHX29</fullName>
        <ecNumber evidence="1">3.6.4.13</ecNumber>
    </recommendedName>
    <alternativeName>
        <fullName evidence="1">DEAH box protein 29</fullName>
    </alternativeName>
    <alternativeName>
        <fullName>Nucleic acid helicase DDXx</fullName>
    </alternativeName>
</protein>
<keyword id="KW-0067">ATP-binding</keyword>
<keyword id="KW-0175">Coiled coil</keyword>
<keyword id="KW-0963">Cytoplasm</keyword>
<keyword id="KW-0347">Helicase</keyword>
<keyword id="KW-0378">Hydrolase</keyword>
<keyword id="KW-0396">Initiation factor</keyword>
<keyword id="KW-0547">Nucleotide-binding</keyword>
<keyword id="KW-0597">Phosphoprotein</keyword>
<keyword id="KW-0648">Protein biosynthesis</keyword>
<keyword id="KW-1267">Proteomics identification</keyword>
<keyword id="KW-1185">Reference proteome</keyword>
<organism>
    <name type="scientific">Homo sapiens</name>
    <name type="common">Human</name>
    <dbReference type="NCBI Taxonomy" id="9606"/>
    <lineage>
        <taxon>Eukaryota</taxon>
        <taxon>Metazoa</taxon>
        <taxon>Chordata</taxon>
        <taxon>Craniata</taxon>
        <taxon>Vertebrata</taxon>
        <taxon>Euteleostomi</taxon>
        <taxon>Mammalia</taxon>
        <taxon>Eutheria</taxon>
        <taxon>Euarchontoglires</taxon>
        <taxon>Primates</taxon>
        <taxon>Haplorrhini</taxon>
        <taxon>Catarrhini</taxon>
        <taxon>Hominidae</taxon>
        <taxon>Homo</taxon>
    </lineage>
</organism>
<accession>Q7Z478</accession>
<accession>O75549</accession>
<accession>Q63HN0</accession>
<accession>Q63HN3</accession>
<accession>Q8IWW2</accession>
<accession>Q8N3A1</accession>
<accession>Q9UMH2</accession>
<evidence type="ECO:0000255" key="1">
    <source>
        <dbReference type="HAMAP-Rule" id="MF_03068"/>
    </source>
</evidence>
<evidence type="ECO:0000256" key="2">
    <source>
        <dbReference type="SAM" id="MobiDB-lite"/>
    </source>
</evidence>
<evidence type="ECO:0000269" key="3">
    <source>
    </source>
</evidence>
<evidence type="ECO:0000269" key="4">
    <source>
    </source>
</evidence>
<evidence type="ECO:0000269" key="5">
    <source>
    </source>
</evidence>
<evidence type="ECO:0000305" key="6"/>
<evidence type="ECO:0007744" key="7">
    <source>
    </source>
</evidence>
<evidence type="ECO:0007744" key="8">
    <source>
    </source>
</evidence>
<evidence type="ECO:0007744" key="9">
    <source>
    </source>
</evidence>
<evidence type="ECO:0007744" key="10">
    <source>
    </source>
</evidence>
<evidence type="ECO:0007744" key="11">
    <source>
    </source>
</evidence>
<feature type="chain" id="PRO_0000245535" description="ATP-dependent RNA helicase DHX29">
    <location>
        <begin position="1"/>
        <end position="1369"/>
    </location>
</feature>
<feature type="domain" description="Helicase ATP-binding" evidence="1">
    <location>
        <begin position="582"/>
        <end position="755"/>
    </location>
</feature>
<feature type="domain" description="Helicase C-terminal" evidence="1">
    <location>
        <begin position="849"/>
        <end position="1026"/>
    </location>
</feature>
<feature type="region of interest" description="Disordered" evidence="2">
    <location>
        <begin position="27"/>
        <end position="75"/>
    </location>
</feature>
<feature type="region of interest" description="Disordered" evidence="2">
    <location>
        <begin position="176"/>
        <end position="226"/>
    </location>
</feature>
<feature type="region of interest" description="Disordered" evidence="2">
    <location>
        <begin position="502"/>
        <end position="526"/>
    </location>
</feature>
<feature type="coiled-coil region" evidence="1">
    <location>
        <begin position="222"/>
        <end position="256"/>
    </location>
</feature>
<feature type="coiled-coil region" evidence="1">
    <location>
        <begin position="283"/>
        <end position="310"/>
    </location>
</feature>
<feature type="coiled-coil region" evidence="1">
    <location>
        <begin position="492"/>
        <end position="519"/>
    </location>
</feature>
<feature type="short sequence motif" description="DEAH box" evidence="1">
    <location>
        <begin position="702"/>
        <end position="705"/>
    </location>
</feature>
<feature type="compositionally biased region" description="Polar residues" evidence="2">
    <location>
        <begin position="189"/>
        <end position="201"/>
    </location>
</feature>
<feature type="compositionally biased region" description="Basic and acidic residues" evidence="2">
    <location>
        <begin position="208"/>
        <end position="226"/>
    </location>
</feature>
<feature type="binding site" evidence="1">
    <location>
        <begin position="595"/>
        <end position="602"/>
    </location>
    <ligand>
        <name>ATP</name>
        <dbReference type="ChEBI" id="CHEBI:30616"/>
    </ligand>
</feature>
<feature type="modified residue" description="Phosphoserine" evidence="9">
    <location>
        <position position="71"/>
    </location>
</feature>
<feature type="modified residue" description="Phosphoserine" evidence="7 8">
    <location>
        <position position="192"/>
    </location>
</feature>
<feature type="modified residue" description="Phosphoserine" evidence="7 8 9 10 11">
    <location>
        <position position="200"/>
    </location>
</feature>
<feature type="sequence variant" id="VAR_052180" description="In dbSNP:rs35874395.">
    <original>D</original>
    <variation>A</variation>
    <location>
        <position position="309"/>
    </location>
</feature>
<feature type="sequence variant" id="VAR_026985" description="In dbSNP:rs17854904." evidence="3">
    <original>P</original>
    <variation>H</variation>
    <location>
        <position position="630"/>
    </location>
</feature>
<feature type="sequence conflict" description="In Ref. 3; CAH56172." evidence="6" ref="3">
    <original>A</original>
    <variation>D</variation>
    <location>
        <position position="121"/>
    </location>
</feature>
<feature type="sequence conflict" description="In Ref. 3; CAH56153." evidence="6" ref="3">
    <original>K</original>
    <variation>E</variation>
    <location>
        <position position="185"/>
    </location>
</feature>
<feature type="sequence conflict" description="In Ref. 1; AAK64516." evidence="6" ref="1">
    <original>D</original>
    <variation>G</variation>
    <location>
        <position position="356"/>
    </location>
</feature>
<feature type="sequence conflict" description="In Ref. 3; CAH56172." evidence="6" ref="3">
    <original>D</original>
    <variation>G</variation>
    <location>
        <position position="885"/>
    </location>
</feature>